<name>RS8_ECO55</name>
<comment type="function">
    <text evidence="1">One of the primary rRNA binding proteins, it binds directly to 16S rRNA central domain where it helps coordinate assembly of the platform of the 30S subunit.</text>
</comment>
<comment type="subunit">
    <text evidence="1">Part of the 30S ribosomal subunit. Contacts proteins S5 and S12.</text>
</comment>
<comment type="similarity">
    <text evidence="1">Belongs to the universal ribosomal protein uS8 family.</text>
</comment>
<keyword id="KW-1185">Reference proteome</keyword>
<keyword id="KW-0687">Ribonucleoprotein</keyword>
<keyword id="KW-0689">Ribosomal protein</keyword>
<keyword id="KW-0694">RNA-binding</keyword>
<keyword id="KW-0699">rRNA-binding</keyword>
<gene>
    <name evidence="1" type="primary">rpsH</name>
    <name type="ordered locus">EC55989_3722</name>
</gene>
<evidence type="ECO:0000255" key="1">
    <source>
        <dbReference type="HAMAP-Rule" id="MF_01302"/>
    </source>
</evidence>
<evidence type="ECO:0000305" key="2"/>
<protein>
    <recommendedName>
        <fullName evidence="1">Small ribosomal subunit protein uS8</fullName>
    </recommendedName>
    <alternativeName>
        <fullName evidence="2">30S ribosomal protein S8</fullName>
    </alternativeName>
</protein>
<feature type="chain" id="PRO_1000165331" description="Small ribosomal subunit protein uS8">
    <location>
        <begin position="1"/>
        <end position="130"/>
    </location>
</feature>
<sequence>MSMQDPIADMLTRIRNGQAANKAAVTMPSSKLKVAIANVLKEEGFIEDFKVEGDTKPELELTLKYFQGKAVVESIQRVSRPGLRIYKRKDELPKVMAGLGIAVVSTSKGVMTDRAARQAGLGGEIICYVA</sequence>
<accession>B7L4J4</accession>
<proteinExistence type="inferred from homology"/>
<organism>
    <name type="scientific">Escherichia coli (strain 55989 / EAEC)</name>
    <dbReference type="NCBI Taxonomy" id="585055"/>
    <lineage>
        <taxon>Bacteria</taxon>
        <taxon>Pseudomonadati</taxon>
        <taxon>Pseudomonadota</taxon>
        <taxon>Gammaproteobacteria</taxon>
        <taxon>Enterobacterales</taxon>
        <taxon>Enterobacteriaceae</taxon>
        <taxon>Escherichia</taxon>
    </lineage>
</organism>
<reference key="1">
    <citation type="journal article" date="2009" name="PLoS Genet.">
        <title>Organised genome dynamics in the Escherichia coli species results in highly diverse adaptive paths.</title>
        <authorList>
            <person name="Touchon M."/>
            <person name="Hoede C."/>
            <person name="Tenaillon O."/>
            <person name="Barbe V."/>
            <person name="Baeriswyl S."/>
            <person name="Bidet P."/>
            <person name="Bingen E."/>
            <person name="Bonacorsi S."/>
            <person name="Bouchier C."/>
            <person name="Bouvet O."/>
            <person name="Calteau A."/>
            <person name="Chiapello H."/>
            <person name="Clermont O."/>
            <person name="Cruveiller S."/>
            <person name="Danchin A."/>
            <person name="Diard M."/>
            <person name="Dossat C."/>
            <person name="Karoui M.E."/>
            <person name="Frapy E."/>
            <person name="Garry L."/>
            <person name="Ghigo J.M."/>
            <person name="Gilles A.M."/>
            <person name="Johnson J."/>
            <person name="Le Bouguenec C."/>
            <person name="Lescat M."/>
            <person name="Mangenot S."/>
            <person name="Martinez-Jehanne V."/>
            <person name="Matic I."/>
            <person name="Nassif X."/>
            <person name="Oztas S."/>
            <person name="Petit M.A."/>
            <person name="Pichon C."/>
            <person name="Rouy Z."/>
            <person name="Ruf C.S."/>
            <person name="Schneider D."/>
            <person name="Tourret J."/>
            <person name="Vacherie B."/>
            <person name="Vallenet D."/>
            <person name="Medigue C."/>
            <person name="Rocha E.P.C."/>
            <person name="Denamur E."/>
        </authorList>
    </citation>
    <scope>NUCLEOTIDE SEQUENCE [LARGE SCALE GENOMIC DNA]</scope>
    <source>
        <strain>55989 / EAEC</strain>
    </source>
</reference>
<dbReference type="EMBL" id="CU928145">
    <property type="protein sequence ID" value="CAV00013.1"/>
    <property type="molecule type" value="Genomic_DNA"/>
</dbReference>
<dbReference type="RefSeq" id="WP_000062611.1">
    <property type="nucleotide sequence ID" value="NZ_CP028304.1"/>
</dbReference>
<dbReference type="SMR" id="B7L4J4"/>
<dbReference type="GeneID" id="93778681"/>
<dbReference type="KEGG" id="eck:EC55989_3722"/>
<dbReference type="HOGENOM" id="CLU_098428_0_0_6"/>
<dbReference type="Proteomes" id="UP000000746">
    <property type="component" value="Chromosome"/>
</dbReference>
<dbReference type="GO" id="GO:1990904">
    <property type="term" value="C:ribonucleoprotein complex"/>
    <property type="evidence" value="ECO:0007669"/>
    <property type="project" value="UniProtKB-KW"/>
</dbReference>
<dbReference type="GO" id="GO:0005840">
    <property type="term" value="C:ribosome"/>
    <property type="evidence" value="ECO:0007669"/>
    <property type="project" value="UniProtKB-KW"/>
</dbReference>
<dbReference type="GO" id="GO:0019843">
    <property type="term" value="F:rRNA binding"/>
    <property type="evidence" value="ECO:0007669"/>
    <property type="project" value="UniProtKB-UniRule"/>
</dbReference>
<dbReference type="GO" id="GO:0003735">
    <property type="term" value="F:structural constituent of ribosome"/>
    <property type="evidence" value="ECO:0007669"/>
    <property type="project" value="InterPro"/>
</dbReference>
<dbReference type="GO" id="GO:0006412">
    <property type="term" value="P:translation"/>
    <property type="evidence" value="ECO:0007669"/>
    <property type="project" value="UniProtKB-UniRule"/>
</dbReference>
<dbReference type="FunFam" id="3.30.1370.30:FF:000003">
    <property type="entry name" value="30S ribosomal protein S8"/>
    <property type="match status" value="1"/>
</dbReference>
<dbReference type="FunFam" id="3.30.1490.10:FF:000001">
    <property type="entry name" value="30S ribosomal protein S8"/>
    <property type="match status" value="1"/>
</dbReference>
<dbReference type="Gene3D" id="3.30.1370.30">
    <property type="match status" value="1"/>
</dbReference>
<dbReference type="Gene3D" id="3.30.1490.10">
    <property type="match status" value="1"/>
</dbReference>
<dbReference type="HAMAP" id="MF_01302_B">
    <property type="entry name" value="Ribosomal_uS8_B"/>
    <property type="match status" value="1"/>
</dbReference>
<dbReference type="InterPro" id="IPR000630">
    <property type="entry name" value="Ribosomal_uS8"/>
</dbReference>
<dbReference type="InterPro" id="IPR047863">
    <property type="entry name" value="Ribosomal_uS8_CS"/>
</dbReference>
<dbReference type="InterPro" id="IPR035987">
    <property type="entry name" value="Ribosomal_uS8_sf"/>
</dbReference>
<dbReference type="NCBIfam" id="NF001109">
    <property type="entry name" value="PRK00136.1"/>
    <property type="match status" value="1"/>
</dbReference>
<dbReference type="PANTHER" id="PTHR11758">
    <property type="entry name" value="40S RIBOSOMAL PROTEIN S15A"/>
    <property type="match status" value="1"/>
</dbReference>
<dbReference type="Pfam" id="PF00410">
    <property type="entry name" value="Ribosomal_S8"/>
    <property type="match status" value="1"/>
</dbReference>
<dbReference type="SUPFAM" id="SSF56047">
    <property type="entry name" value="Ribosomal protein S8"/>
    <property type="match status" value="1"/>
</dbReference>
<dbReference type="PROSITE" id="PS00053">
    <property type="entry name" value="RIBOSOMAL_S8"/>
    <property type="match status" value="1"/>
</dbReference>